<gene>
    <name evidence="1" type="primary">rbfA</name>
    <name type="ordered locus">DET0982</name>
</gene>
<evidence type="ECO:0000255" key="1">
    <source>
        <dbReference type="HAMAP-Rule" id="MF_00003"/>
    </source>
</evidence>
<reference key="1">
    <citation type="journal article" date="2005" name="Science">
        <title>Genome sequence of the PCE-dechlorinating bacterium Dehalococcoides ethenogenes.</title>
        <authorList>
            <person name="Seshadri R."/>
            <person name="Adrian L."/>
            <person name="Fouts D.E."/>
            <person name="Eisen J.A."/>
            <person name="Phillippy A.M."/>
            <person name="Methe B.A."/>
            <person name="Ward N.L."/>
            <person name="Nelson W.C."/>
            <person name="DeBoy R.T."/>
            <person name="Khouri H.M."/>
            <person name="Kolonay J.F."/>
            <person name="Dodson R.J."/>
            <person name="Daugherty S.C."/>
            <person name="Brinkac L.M."/>
            <person name="Sullivan S.A."/>
            <person name="Madupu R."/>
            <person name="Nelson K.E."/>
            <person name="Kang K.H."/>
            <person name="Impraim M."/>
            <person name="Tran K."/>
            <person name="Robinson J.M."/>
            <person name="Forberger H.A."/>
            <person name="Fraser C.M."/>
            <person name="Zinder S.H."/>
            <person name="Heidelberg J.F."/>
        </authorList>
    </citation>
    <scope>NUCLEOTIDE SEQUENCE [LARGE SCALE GENOMIC DNA]</scope>
    <source>
        <strain>ATCC BAA-2266 / KCTC 15142 / 195</strain>
    </source>
</reference>
<accession>Q3Z7U4</accession>
<keyword id="KW-0963">Cytoplasm</keyword>
<keyword id="KW-0690">Ribosome biogenesis</keyword>
<feature type="chain" id="PRO_0000321216" description="Ribosome-binding factor A">
    <location>
        <begin position="1"/>
        <end position="118"/>
    </location>
</feature>
<protein>
    <recommendedName>
        <fullName evidence="1">Ribosome-binding factor A</fullName>
    </recommendedName>
</protein>
<organism>
    <name type="scientific">Dehalococcoides mccartyi (strain ATCC BAA-2266 / KCTC 15142 / 195)</name>
    <name type="common">Dehalococcoides ethenogenes (strain 195)</name>
    <dbReference type="NCBI Taxonomy" id="243164"/>
    <lineage>
        <taxon>Bacteria</taxon>
        <taxon>Bacillati</taxon>
        <taxon>Chloroflexota</taxon>
        <taxon>Dehalococcoidia</taxon>
        <taxon>Dehalococcoidales</taxon>
        <taxon>Dehalococcoidaceae</taxon>
        <taxon>Dehalococcoides</taxon>
    </lineage>
</organism>
<sequence length="118" mass="13651">MSRRVKKLNQLFRADISALLQKEVRDPRLDTLLSVNEVDVSEDMRHATVYVSHLAGDEHKDEILAALNAAAGFFRTEIAKKTDIRYMPVFNFIWDDTIERGVRLNTLIDRVTQHQPED</sequence>
<name>RBFA_DEHM1</name>
<dbReference type="EMBL" id="CP000027">
    <property type="protein sequence ID" value="AAW39799.1"/>
    <property type="molecule type" value="Genomic_DNA"/>
</dbReference>
<dbReference type="RefSeq" id="WP_010936684.1">
    <property type="nucleotide sequence ID" value="NC_002936.3"/>
</dbReference>
<dbReference type="SMR" id="Q3Z7U4"/>
<dbReference type="FunCoup" id="Q3Z7U4">
    <property type="interactions" value="302"/>
</dbReference>
<dbReference type="STRING" id="243164.DET0982"/>
<dbReference type="GeneID" id="3229761"/>
<dbReference type="KEGG" id="det:DET0982"/>
<dbReference type="eggNOG" id="COG0858">
    <property type="taxonomic scope" value="Bacteria"/>
</dbReference>
<dbReference type="HOGENOM" id="CLU_089475_5_1_0"/>
<dbReference type="InParanoid" id="Q3Z7U4"/>
<dbReference type="Proteomes" id="UP000008289">
    <property type="component" value="Chromosome"/>
</dbReference>
<dbReference type="GO" id="GO:0005829">
    <property type="term" value="C:cytosol"/>
    <property type="evidence" value="ECO:0007669"/>
    <property type="project" value="TreeGrafter"/>
</dbReference>
<dbReference type="GO" id="GO:0043024">
    <property type="term" value="F:ribosomal small subunit binding"/>
    <property type="evidence" value="ECO:0007669"/>
    <property type="project" value="TreeGrafter"/>
</dbReference>
<dbReference type="GO" id="GO:0030490">
    <property type="term" value="P:maturation of SSU-rRNA"/>
    <property type="evidence" value="ECO:0007669"/>
    <property type="project" value="UniProtKB-UniRule"/>
</dbReference>
<dbReference type="Gene3D" id="3.30.300.20">
    <property type="match status" value="1"/>
</dbReference>
<dbReference type="HAMAP" id="MF_00003">
    <property type="entry name" value="RbfA"/>
    <property type="match status" value="1"/>
</dbReference>
<dbReference type="InterPro" id="IPR015946">
    <property type="entry name" value="KH_dom-like_a/b"/>
</dbReference>
<dbReference type="InterPro" id="IPR000238">
    <property type="entry name" value="RbfA"/>
</dbReference>
<dbReference type="InterPro" id="IPR023799">
    <property type="entry name" value="RbfA_dom_sf"/>
</dbReference>
<dbReference type="InterPro" id="IPR020053">
    <property type="entry name" value="Ribosome-bd_factorA_CS"/>
</dbReference>
<dbReference type="NCBIfam" id="TIGR00082">
    <property type="entry name" value="rbfA"/>
    <property type="match status" value="1"/>
</dbReference>
<dbReference type="PANTHER" id="PTHR33515">
    <property type="entry name" value="RIBOSOME-BINDING FACTOR A, CHLOROPLASTIC-RELATED"/>
    <property type="match status" value="1"/>
</dbReference>
<dbReference type="PANTHER" id="PTHR33515:SF1">
    <property type="entry name" value="RIBOSOME-BINDING FACTOR A, CHLOROPLASTIC-RELATED"/>
    <property type="match status" value="1"/>
</dbReference>
<dbReference type="Pfam" id="PF02033">
    <property type="entry name" value="RBFA"/>
    <property type="match status" value="1"/>
</dbReference>
<dbReference type="SUPFAM" id="SSF89919">
    <property type="entry name" value="Ribosome-binding factor A, RbfA"/>
    <property type="match status" value="1"/>
</dbReference>
<dbReference type="PROSITE" id="PS01319">
    <property type="entry name" value="RBFA"/>
    <property type="match status" value="1"/>
</dbReference>
<proteinExistence type="inferred from homology"/>
<comment type="function">
    <text evidence="1">One of several proteins that assist in the late maturation steps of the functional core of the 30S ribosomal subunit. Associates with free 30S ribosomal subunits (but not with 30S subunits that are part of 70S ribosomes or polysomes). Required for efficient processing of 16S rRNA. May interact with the 5'-terminal helix region of 16S rRNA.</text>
</comment>
<comment type="subunit">
    <text evidence="1">Monomer. Binds 30S ribosomal subunits, but not 50S ribosomal subunits or 70S ribosomes.</text>
</comment>
<comment type="subcellular location">
    <subcellularLocation>
        <location evidence="1">Cytoplasm</location>
    </subcellularLocation>
</comment>
<comment type="similarity">
    <text evidence="1">Belongs to the RbfA family.</text>
</comment>